<feature type="signal peptide" evidence="2">
    <location>
        <begin position="1"/>
        <end position="34"/>
    </location>
</feature>
<feature type="chain" id="PRO_0000342194" description="NELL2-interacting cell ontogeny regulator 1">
    <location>
        <begin position="35"/>
        <end position="95"/>
    </location>
</feature>
<feature type="splice variant" id="VSP_040898" description="In isoform 2." evidence="5">
    <original>M</original>
    <variation>MGNPGGVGSERMRVARRTRNVCRCPRAAGPGVPEPRAAPLPLLAM</variation>
    <location>
        <position position="1"/>
    </location>
</feature>
<feature type="splice variant" id="VSP_057610" description="In isoform 3.">
    <original>M</original>
    <variation>MRVARRTRNVCRCPRAAGPGVPEPRAAPLPLLAM</variation>
    <location>
        <position position="1"/>
    </location>
</feature>
<feature type="sequence conflict" description="In Ref. 4; AI929674." evidence="5" ref="4">
    <original>P</original>
    <variation>L</variation>
    <location>
        <position position="17"/>
    </location>
</feature>
<organism>
    <name type="scientific">Homo sapiens</name>
    <name type="common">Human</name>
    <dbReference type="NCBI Taxonomy" id="9606"/>
    <lineage>
        <taxon>Eukaryota</taxon>
        <taxon>Metazoa</taxon>
        <taxon>Chordata</taxon>
        <taxon>Craniata</taxon>
        <taxon>Vertebrata</taxon>
        <taxon>Euteleostomi</taxon>
        <taxon>Mammalia</taxon>
        <taxon>Eutheria</taxon>
        <taxon>Euarchontoglires</taxon>
        <taxon>Primates</taxon>
        <taxon>Haplorrhini</taxon>
        <taxon>Catarrhini</taxon>
        <taxon>Hominidae</taxon>
        <taxon>Homo</taxon>
    </lineage>
</organism>
<reference key="1">
    <citation type="journal article" date="2005" name="Nature">
        <title>Generation and annotation of the DNA sequences of human chromosomes 2 and 4.</title>
        <authorList>
            <person name="Hillier L.W."/>
            <person name="Graves T.A."/>
            <person name="Fulton R.S."/>
            <person name="Fulton L.A."/>
            <person name="Pepin K.H."/>
            <person name="Minx P."/>
            <person name="Wagner-McPherson C."/>
            <person name="Layman D."/>
            <person name="Wylie K."/>
            <person name="Sekhon M."/>
            <person name="Becker M.C."/>
            <person name="Fewell G.A."/>
            <person name="Delehaunty K.D."/>
            <person name="Miner T.L."/>
            <person name="Nash W.E."/>
            <person name="Kremitzki C."/>
            <person name="Oddy L."/>
            <person name="Du H."/>
            <person name="Sun H."/>
            <person name="Bradshaw-Cordum H."/>
            <person name="Ali J."/>
            <person name="Carter J."/>
            <person name="Cordes M."/>
            <person name="Harris A."/>
            <person name="Isak A."/>
            <person name="van Brunt A."/>
            <person name="Nguyen C."/>
            <person name="Du F."/>
            <person name="Courtney L."/>
            <person name="Kalicki J."/>
            <person name="Ozersky P."/>
            <person name="Abbott S."/>
            <person name="Armstrong J."/>
            <person name="Belter E.A."/>
            <person name="Caruso L."/>
            <person name="Cedroni M."/>
            <person name="Cotton M."/>
            <person name="Davidson T."/>
            <person name="Desai A."/>
            <person name="Elliott G."/>
            <person name="Erb T."/>
            <person name="Fronick C."/>
            <person name="Gaige T."/>
            <person name="Haakenson W."/>
            <person name="Haglund K."/>
            <person name="Holmes A."/>
            <person name="Harkins R."/>
            <person name="Kim K."/>
            <person name="Kruchowski S.S."/>
            <person name="Strong C.M."/>
            <person name="Grewal N."/>
            <person name="Goyea E."/>
            <person name="Hou S."/>
            <person name="Levy A."/>
            <person name="Martinka S."/>
            <person name="Mead K."/>
            <person name="McLellan M.D."/>
            <person name="Meyer R."/>
            <person name="Randall-Maher J."/>
            <person name="Tomlinson C."/>
            <person name="Dauphin-Kohlberg S."/>
            <person name="Kozlowicz-Reilly A."/>
            <person name="Shah N."/>
            <person name="Swearengen-Shahid S."/>
            <person name="Snider J."/>
            <person name="Strong J.T."/>
            <person name="Thompson J."/>
            <person name="Yoakum M."/>
            <person name="Leonard S."/>
            <person name="Pearman C."/>
            <person name="Trani L."/>
            <person name="Radionenko M."/>
            <person name="Waligorski J.E."/>
            <person name="Wang C."/>
            <person name="Rock S.M."/>
            <person name="Tin-Wollam A.-M."/>
            <person name="Maupin R."/>
            <person name="Latreille P."/>
            <person name="Wendl M.C."/>
            <person name="Yang S.-P."/>
            <person name="Pohl C."/>
            <person name="Wallis J.W."/>
            <person name="Spieth J."/>
            <person name="Bieri T.A."/>
            <person name="Berkowicz N."/>
            <person name="Nelson J.O."/>
            <person name="Osborne J."/>
            <person name="Ding L."/>
            <person name="Meyer R."/>
            <person name="Sabo A."/>
            <person name="Shotland Y."/>
            <person name="Sinha P."/>
            <person name="Wohldmann P.E."/>
            <person name="Cook L.L."/>
            <person name="Hickenbotham M.T."/>
            <person name="Eldred J."/>
            <person name="Williams D."/>
            <person name="Jones T.A."/>
            <person name="She X."/>
            <person name="Ciccarelli F.D."/>
            <person name="Izaurralde E."/>
            <person name="Taylor J."/>
            <person name="Schmutz J."/>
            <person name="Myers R.M."/>
            <person name="Cox D.R."/>
            <person name="Huang X."/>
            <person name="McPherson J.D."/>
            <person name="Mardis E.R."/>
            <person name="Clifton S.W."/>
            <person name="Warren W.C."/>
            <person name="Chinwalla A.T."/>
            <person name="Eddy S.R."/>
            <person name="Marra M.A."/>
            <person name="Ovcharenko I."/>
            <person name="Furey T.S."/>
            <person name="Miller W."/>
            <person name="Eichler E.E."/>
            <person name="Bork P."/>
            <person name="Suyama M."/>
            <person name="Torrents D."/>
            <person name="Waterston R.H."/>
            <person name="Wilson R.K."/>
        </authorList>
    </citation>
    <scope>NUCLEOTIDE SEQUENCE [LARGE SCALE GENOMIC DNA]</scope>
</reference>
<reference key="2">
    <citation type="journal article" date="2004" name="Genome Res.">
        <title>The status, quality, and expansion of the NIH full-length cDNA project: the Mammalian Gene Collection (MGC).</title>
        <authorList>
            <consortium name="The MGC Project Team"/>
        </authorList>
    </citation>
    <scope>NUCLEOTIDE SEQUENCE [LARGE SCALE MRNA] (ISOFORM 1)</scope>
</reference>
<reference key="3">
    <citation type="journal article" date="2005" name="Nucleic Acids Res.">
        <title>Comparative gene finding in chicken indicates that we are closing in on the set of multi-exonic widely expressed human genes.</title>
        <authorList>
            <person name="Castelo R."/>
            <person name="Reymond A."/>
            <person name="Wyss C."/>
            <person name="Camara F."/>
            <person name="Parra G."/>
            <person name="Antonarakis S.E."/>
            <person name="Guigo R."/>
            <person name="Eyras E."/>
        </authorList>
    </citation>
    <scope>NUCLEOTIDE SEQUENCE [MRNA] OF 61-82</scope>
</reference>
<reference key="4">
    <citation type="submission" date="2000-03" db="EMBL/GenBank/DDBJ databases">
        <title>WashU-NCI human EST project.</title>
        <authorList>
            <person name="Hillier L."/>
            <person name="Allen M."/>
            <person name="Bowles L."/>
            <person name="Dubuque T."/>
            <person name="Geisel G."/>
            <person name="Jost S."/>
            <person name="Krizman D."/>
            <person name="Kucaba T."/>
            <person name="Lacy M."/>
            <person name="Le N."/>
            <person name="Lennon G."/>
            <person name="Marra M."/>
            <person name="Martin J."/>
            <person name="Moore B."/>
            <person name="Schellenberg K."/>
            <person name="Steptoe M."/>
            <person name="Tan F."/>
            <person name="Theising B."/>
            <person name="White Y."/>
            <person name="Wylie T."/>
            <person name="Waterston R."/>
            <person name="Wilson R."/>
        </authorList>
    </citation>
    <scope>PARTIAL NUCLEOTIDE SEQUENCE [LARGE SCALE MRNA] (ISOFORM 2)</scope>
</reference>
<reference key="5">
    <citation type="journal article" date="2011" name="Neurogenetics">
        <title>C4ORF48, a gene from the Wolf-Hirschhorn syndrome critical region, encodes a putative neuropeptide and is expressed during neocortex and cerebellar development.</title>
        <authorList>
            <person name="Endele S."/>
            <person name="Nelkenbrecher C."/>
            <person name="Bordlein A."/>
            <person name="Schlickum S."/>
            <person name="Winterpacht A."/>
        </authorList>
    </citation>
    <scope>ALTERNATIVE SPLICING (ISOFORMS 1 AND 2)</scope>
    <scope>TISSUE SPECIFICITY</scope>
</reference>
<reference key="6">
    <citation type="journal article" date="2024" name="J. Clin. Invest.">
        <title>The secreted micropeptide C4orf48 enhances renal fibrosis via an RNA-binding mechanism.</title>
        <authorList>
            <person name="Yang J."/>
            <person name="Zhuang H."/>
            <person name="Li J."/>
            <person name="Nunez-Nescolarde A.B."/>
            <person name="Luo N."/>
            <person name="Chen H."/>
            <person name="Li A."/>
            <person name="Qu X."/>
            <person name="Wang Q."/>
            <person name="Fan J."/>
            <person name="Bai X."/>
            <person name="Ye Z."/>
            <person name="Gu B."/>
            <person name="Meng Y."/>
            <person name="Zhang X."/>
            <person name="Wu D."/>
            <person name="Sia Y."/>
            <person name="Jiang X."/>
            <person name="Chen W."/>
            <person name="Combes A.N."/>
            <person name="Nikolic-Paterson D.J."/>
            <person name="Yu X."/>
        </authorList>
    </citation>
    <scope>TISSUE SPECIFICITY</scope>
</reference>
<accession>Q5BLP8</accession>
<accession>B6ZDN0</accession>
<accession>B7ZBI7</accession>
<accession>B7ZBI8</accession>
<accession>X6RBU3</accession>
<name>NICOL_HUMAN</name>
<dbReference type="EMBL" id="AL132868">
    <property type="status" value="NOT_ANNOTATED_CDS"/>
    <property type="molecule type" value="Genomic_DNA"/>
</dbReference>
<dbReference type="EMBL" id="BC047038">
    <property type="status" value="NOT_ANNOTATED_CDS"/>
    <property type="molecule type" value="mRNA"/>
</dbReference>
<dbReference type="EMBL" id="AY947524">
    <property type="protein sequence ID" value="AAX21785.1"/>
    <property type="molecule type" value="mRNA"/>
</dbReference>
<dbReference type="EMBL" id="AI929674">
    <property type="status" value="NOT_ANNOTATED_CDS"/>
    <property type="molecule type" value="mRNA"/>
</dbReference>
<dbReference type="CCDS" id="CCDS47000.2">
    <molecule id="Q5BLP8-1"/>
</dbReference>
<dbReference type="RefSeq" id="NP_001135408.3">
    <molecule id="Q5BLP8-1"/>
    <property type="nucleotide sequence ID" value="NM_001141936.3"/>
</dbReference>
<dbReference type="RefSeq" id="NP_001161715.3">
    <molecule id="Q5BLP8-1"/>
    <property type="nucleotide sequence ID" value="NM_001168243.4"/>
</dbReference>
<dbReference type="SMR" id="Q5BLP8"/>
<dbReference type="CORUM" id="Q5BLP8"/>
<dbReference type="FunCoup" id="Q5BLP8">
    <property type="interactions" value="48"/>
</dbReference>
<dbReference type="IntAct" id="Q5BLP8">
    <property type="interactions" value="3"/>
</dbReference>
<dbReference type="STRING" id="9606.ENSP00000386807"/>
<dbReference type="GlyGen" id="Q5BLP8">
    <property type="glycosylation" value="1 site, 1 O-linked glycan (1 site)"/>
</dbReference>
<dbReference type="iPTMnet" id="Q5BLP8"/>
<dbReference type="BioMuta" id="C4orf48"/>
<dbReference type="DMDM" id="327478590"/>
<dbReference type="jPOST" id="Q5BLP8"/>
<dbReference type="MassIVE" id="Q5BLP8"/>
<dbReference type="PaxDb" id="9606-ENSP00000386807"/>
<dbReference type="PeptideAtlas" id="Q5BLP8"/>
<dbReference type="ProteomicsDB" id="62716">
    <molecule id="Q5BLP8-1"/>
</dbReference>
<dbReference type="ProteomicsDB" id="62717">
    <molecule id="Q5BLP8-2"/>
</dbReference>
<dbReference type="Pumba" id="Q5BLP8"/>
<dbReference type="Antibodypedia" id="64905">
    <property type="antibodies" value="6 antibodies from 6 providers"/>
</dbReference>
<dbReference type="Ensembl" id="ENST00000409248.10">
    <molecule id="Q5BLP8-1"/>
    <property type="protein sequence ID" value="ENSP00000386807.5"/>
    <property type="gene ID" value="ENSG00000243449.8"/>
</dbReference>
<dbReference type="Ensembl" id="ENST00000409860.1">
    <molecule id="Q5BLP8-1"/>
    <property type="protein sequence ID" value="ENSP00000386528.1"/>
    <property type="gene ID" value="ENSG00000243449.8"/>
</dbReference>
<dbReference type="GeneID" id="401115"/>
<dbReference type="MANE-Select" id="ENST00000409248.10">
    <property type="protein sequence ID" value="ENSP00000386807.5"/>
    <property type="RefSeq nucleotide sequence ID" value="NM_001168243.4"/>
    <property type="RefSeq protein sequence ID" value="NP_001161715.3"/>
</dbReference>
<dbReference type="UCSC" id="uc003gep.4">
    <molecule id="Q5BLP8-1"/>
    <property type="organism name" value="human"/>
</dbReference>
<dbReference type="UCSC" id="uc021xkn.1">
    <property type="organism name" value="human"/>
</dbReference>
<dbReference type="AGR" id="HGNC:34437"/>
<dbReference type="GeneCards" id="NICOL1"/>
<dbReference type="HGNC" id="HGNC:34437">
    <property type="gene designation" value="NICOL1"/>
</dbReference>
<dbReference type="HPA" id="ENSG00000243449">
    <property type="expression patterns" value="Tissue enhanced (brain, pituitary gland)"/>
</dbReference>
<dbReference type="MIM" id="614690">
    <property type="type" value="gene"/>
</dbReference>
<dbReference type="neXtProt" id="NX_Q5BLP8"/>
<dbReference type="OpenTargets" id="ENSG00000243449"/>
<dbReference type="PharmGKB" id="PA164717315"/>
<dbReference type="VEuPathDB" id="HostDB:ENSG00000243449"/>
<dbReference type="eggNOG" id="ENOG502S5WR">
    <property type="taxonomic scope" value="Eukaryota"/>
</dbReference>
<dbReference type="GeneTree" id="ENSGT00390000013043"/>
<dbReference type="HOGENOM" id="CLU_153985_0_0_1"/>
<dbReference type="InParanoid" id="Q5BLP8"/>
<dbReference type="PAN-GO" id="Q5BLP8">
    <property type="GO annotations" value="0 GO annotations based on evolutionary models"/>
</dbReference>
<dbReference type="PhylomeDB" id="Q5BLP8"/>
<dbReference type="TreeFam" id="TF336171"/>
<dbReference type="PathwayCommons" id="Q5BLP8"/>
<dbReference type="SignaLink" id="Q5BLP8"/>
<dbReference type="ChiTaRS" id="C4orf48">
    <property type="organism name" value="human"/>
</dbReference>
<dbReference type="Pharos" id="Q5BLP8">
    <property type="development level" value="Tdark"/>
</dbReference>
<dbReference type="PRO" id="PR:Q5BLP8"/>
<dbReference type="Proteomes" id="UP000005640">
    <property type="component" value="Chromosome 4"/>
</dbReference>
<dbReference type="RNAct" id="Q5BLP8">
    <property type="molecule type" value="protein"/>
</dbReference>
<dbReference type="Bgee" id="ENSG00000243449">
    <property type="expression patterns" value="Expressed in C1 segment of cervical spinal cord and 171 other cell types or tissues"/>
</dbReference>
<dbReference type="GO" id="GO:0005615">
    <property type="term" value="C:extracellular space"/>
    <property type="evidence" value="ECO:0000250"/>
    <property type="project" value="UniProtKB"/>
</dbReference>
<dbReference type="GO" id="GO:0048471">
    <property type="term" value="C:perinuclear region of cytoplasm"/>
    <property type="evidence" value="ECO:0000250"/>
    <property type="project" value="UniProtKB"/>
</dbReference>
<dbReference type="GO" id="GO:0003730">
    <property type="term" value="F:mRNA 3'-UTR binding"/>
    <property type="evidence" value="ECO:0000250"/>
    <property type="project" value="UniProtKB"/>
</dbReference>
<dbReference type="GO" id="GO:1990459">
    <property type="term" value="F:transferrin receptor binding"/>
    <property type="evidence" value="ECO:0007669"/>
    <property type="project" value="Ensembl"/>
</dbReference>
<dbReference type="GO" id="GO:0070935">
    <property type="term" value="P:3'-UTR-mediated mRNA stabilization"/>
    <property type="evidence" value="ECO:0000250"/>
    <property type="project" value="UniProtKB"/>
</dbReference>
<dbReference type="GO" id="GO:0007283">
    <property type="term" value="P:spermatogenesis"/>
    <property type="evidence" value="ECO:0000318"/>
    <property type="project" value="GO_Central"/>
</dbReference>
<dbReference type="InterPro" id="IPR028147">
    <property type="entry name" value="NICOL"/>
</dbReference>
<dbReference type="PANTHER" id="PTHR35451">
    <property type="entry name" value="NEUROPEPTIDE-LIKE PROTEIN C4ORF48"/>
    <property type="match status" value="1"/>
</dbReference>
<dbReference type="PANTHER" id="PTHR35451:SF1">
    <property type="entry name" value="NEUROPEPTIDE-LIKE PROTEIN C4ORF48"/>
    <property type="match status" value="1"/>
</dbReference>
<dbReference type="Pfam" id="PF15161">
    <property type="entry name" value="Neuropep_like"/>
    <property type="match status" value="1"/>
</dbReference>
<keyword id="KW-0025">Alternative splicing</keyword>
<keyword id="KW-0963">Cytoplasm</keyword>
<keyword id="KW-1267">Proteomics identification</keyword>
<keyword id="KW-1185">Reference proteome</keyword>
<keyword id="KW-0694">RNA-binding</keyword>
<keyword id="KW-0964">Secreted</keyword>
<keyword id="KW-0732">Signal</keyword>
<gene>
    <name evidence="6" type="primary">NICOL1</name>
    <name evidence="6" type="synonym">C4orf48</name>
</gene>
<sequence length="95" mass="10170">MAPPPACRSPMSPPPPPLLLLLLSLALLGARARAEPAGSAVPAQSRPCVDCHAFEFMQRALQDLRKTACSLDARTETLLLQAERRALCACWPAGH</sequence>
<comment type="function">
    <text evidence="1">mRNA-binding protein which interacts with a range of target mRNAs including SERPINE1, ACTA2, CCN2 and COL4A1 and may promote extracellular matrix production. Binds to the 3'-UTR of SERPINE1 mRNA and stabilizes the mRNA, possibly by competing for binding with SERBP1 and preventing SERBP1-mediated mRNA degradation. Also binds to the 3'-UTR of ACTA2. Testis-derived lumicrine factor that triggers epididymal differentiation and sperm maturation.</text>
</comment>
<comment type="subunit">
    <text evidence="1">Interacts with NELL2; triggers epididymal differentiation. Interacts with cell surface receptor TFRC; the interaction mediates uptake of NICOL1 into fibroblasts.</text>
</comment>
<comment type="subcellular location">
    <subcellularLocation>
        <location evidence="1">Secreted</location>
    </subcellularLocation>
    <subcellularLocation>
        <location evidence="1">Cytoplasm</location>
        <location evidence="1">Perinuclear region</location>
    </subcellularLocation>
    <text evidence="1">Detected in the perinuclear region of fibroblasts.</text>
</comment>
<comment type="alternative products">
    <event type="alternative splicing"/>
    <isoform>
        <id>Q5BLP8-1</id>
        <name>1</name>
        <sequence type="displayed"/>
    </isoform>
    <isoform>
        <id>Q5BLP8-2</id>
        <name>2</name>
        <sequence type="described" ref="VSP_040898"/>
    </isoform>
    <isoform>
        <id>Q5BLP8-3</id>
        <name>3</name>
        <sequence type="described" ref="VSP_057610"/>
    </isoform>
</comment>
<comment type="tissue specificity">
    <text evidence="3 4">Detected in the brain (at protein level) (PubMed:21287218). Also expressed at low levels in the kidney, primarily in tubular epithelial cells (PubMed:38625739).</text>
</comment>
<comment type="miscellaneous">
    <text evidence="4">Up-regulated in the kidneys and serum of patients with diabetic nephropathy and enhances renal fibrosis so may have promise as a biomarker of renal fibrosis and as a therapeutic agent for chronic kidney disease.</text>
</comment>
<comment type="similarity">
    <text evidence="5">Belongs to the NICOL family.</text>
</comment>
<proteinExistence type="evidence at protein level"/>
<protein>
    <recommendedName>
        <fullName evidence="6">NELL2-interacting cell ontogeny regulator 1</fullName>
    </recommendedName>
    <alternativeName>
        <fullName evidence="1">NELL2-interacting cofactor for lumicrine signaling</fullName>
        <shortName evidence="1">NICOL</shortName>
    </alternativeName>
</protein>
<evidence type="ECO:0000250" key="1">
    <source>
        <dbReference type="UniProtKB" id="Q3UR78"/>
    </source>
</evidence>
<evidence type="ECO:0000255" key="2"/>
<evidence type="ECO:0000269" key="3">
    <source>
    </source>
</evidence>
<evidence type="ECO:0000269" key="4">
    <source>
    </source>
</evidence>
<evidence type="ECO:0000305" key="5"/>
<evidence type="ECO:0000312" key="6">
    <source>
        <dbReference type="HGNC" id="HGNC:34437"/>
    </source>
</evidence>